<accession>A4QKB0</accession>
<organism>
    <name type="scientific">Barbarea verna</name>
    <name type="common">Land cress</name>
    <name type="synonym">Erysimum vernum</name>
    <dbReference type="NCBI Taxonomy" id="50458"/>
    <lineage>
        <taxon>Eukaryota</taxon>
        <taxon>Viridiplantae</taxon>
        <taxon>Streptophyta</taxon>
        <taxon>Embryophyta</taxon>
        <taxon>Tracheophyta</taxon>
        <taxon>Spermatophyta</taxon>
        <taxon>Magnoliopsida</taxon>
        <taxon>eudicotyledons</taxon>
        <taxon>Gunneridae</taxon>
        <taxon>Pentapetalae</taxon>
        <taxon>rosids</taxon>
        <taxon>malvids</taxon>
        <taxon>Brassicales</taxon>
        <taxon>Brassicaceae</taxon>
        <taxon>Cardamineae</taxon>
        <taxon>Barbarea</taxon>
    </lineage>
</organism>
<proteinExistence type="inferred from homology"/>
<evidence type="ECO:0000255" key="1">
    <source>
        <dbReference type="HAMAP-Rule" id="MF_01394"/>
    </source>
</evidence>
<reference key="1">
    <citation type="submission" date="2007-03" db="EMBL/GenBank/DDBJ databases">
        <title>Sequencing analysis of Barbarea verna chloroplast DNA.</title>
        <authorList>
            <person name="Hosouchi T."/>
            <person name="Tsuruoka H."/>
            <person name="Kotani H."/>
        </authorList>
    </citation>
    <scope>NUCLEOTIDE SEQUENCE [LARGE SCALE GENOMIC DNA]</scope>
</reference>
<keyword id="KW-0150">Chloroplast</keyword>
<keyword id="KW-0472">Membrane</keyword>
<keyword id="KW-0520">NAD</keyword>
<keyword id="KW-0521">NADP</keyword>
<keyword id="KW-0934">Plastid</keyword>
<keyword id="KW-0618">Plastoquinone</keyword>
<keyword id="KW-0874">Quinone</keyword>
<keyword id="KW-0793">Thylakoid</keyword>
<keyword id="KW-1278">Translocase</keyword>
<keyword id="KW-0812">Transmembrane</keyword>
<keyword id="KW-1133">Transmembrane helix</keyword>
<keyword id="KW-0813">Transport</keyword>
<comment type="function">
    <text evidence="1">NDH shuttles electrons from NAD(P)H:plastoquinone, via FMN and iron-sulfur (Fe-S) centers, to quinones in the photosynthetic chain and possibly in a chloroplast respiratory chain. The immediate electron acceptor for the enzyme in this species is believed to be plastoquinone. Couples the redox reaction to proton translocation, and thus conserves the redox energy in a proton gradient.</text>
</comment>
<comment type="catalytic activity">
    <reaction evidence="1">
        <text>a plastoquinone + NADH + (n+1) H(+)(in) = a plastoquinol + NAD(+) + n H(+)(out)</text>
        <dbReference type="Rhea" id="RHEA:42608"/>
        <dbReference type="Rhea" id="RHEA-COMP:9561"/>
        <dbReference type="Rhea" id="RHEA-COMP:9562"/>
        <dbReference type="ChEBI" id="CHEBI:15378"/>
        <dbReference type="ChEBI" id="CHEBI:17757"/>
        <dbReference type="ChEBI" id="CHEBI:57540"/>
        <dbReference type="ChEBI" id="CHEBI:57945"/>
        <dbReference type="ChEBI" id="CHEBI:62192"/>
    </reaction>
</comment>
<comment type="catalytic activity">
    <reaction evidence="1">
        <text>a plastoquinone + NADPH + (n+1) H(+)(in) = a plastoquinol + NADP(+) + n H(+)(out)</text>
        <dbReference type="Rhea" id="RHEA:42612"/>
        <dbReference type="Rhea" id="RHEA-COMP:9561"/>
        <dbReference type="Rhea" id="RHEA-COMP:9562"/>
        <dbReference type="ChEBI" id="CHEBI:15378"/>
        <dbReference type="ChEBI" id="CHEBI:17757"/>
        <dbReference type="ChEBI" id="CHEBI:57783"/>
        <dbReference type="ChEBI" id="CHEBI:58349"/>
        <dbReference type="ChEBI" id="CHEBI:62192"/>
    </reaction>
</comment>
<comment type="subunit">
    <text evidence="1">NDH is composed of at least 16 different subunits, 5 of which are encoded in the nucleus.</text>
</comment>
<comment type="subcellular location">
    <subcellularLocation>
        <location evidence="1">Plastid</location>
        <location evidence="1">Chloroplast thylakoid membrane</location>
        <topology evidence="1">Multi-pass membrane protein</topology>
    </subcellularLocation>
</comment>
<comment type="similarity">
    <text evidence="1">Belongs to the complex I subunit 3 family.</text>
</comment>
<dbReference type="EC" id="7.1.1.-" evidence="1"/>
<dbReference type="EMBL" id="AP009370">
    <property type="protein sequence ID" value="BAF50115.1"/>
    <property type="molecule type" value="Genomic_DNA"/>
</dbReference>
<dbReference type="RefSeq" id="YP_001123291.1">
    <property type="nucleotide sequence ID" value="NC_009269.1"/>
</dbReference>
<dbReference type="SMR" id="A4QKB0"/>
<dbReference type="GeneID" id="4961838"/>
<dbReference type="GO" id="GO:0009535">
    <property type="term" value="C:chloroplast thylakoid membrane"/>
    <property type="evidence" value="ECO:0007669"/>
    <property type="project" value="UniProtKB-SubCell"/>
</dbReference>
<dbReference type="GO" id="GO:0030964">
    <property type="term" value="C:NADH dehydrogenase complex"/>
    <property type="evidence" value="ECO:0007669"/>
    <property type="project" value="TreeGrafter"/>
</dbReference>
<dbReference type="GO" id="GO:0008137">
    <property type="term" value="F:NADH dehydrogenase (ubiquinone) activity"/>
    <property type="evidence" value="ECO:0007669"/>
    <property type="project" value="InterPro"/>
</dbReference>
<dbReference type="GO" id="GO:0048038">
    <property type="term" value="F:quinone binding"/>
    <property type="evidence" value="ECO:0007669"/>
    <property type="project" value="UniProtKB-KW"/>
</dbReference>
<dbReference type="GO" id="GO:0019684">
    <property type="term" value="P:photosynthesis, light reaction"/>
    <property type="evidence" value="ECO:0007669"/>
    <property type="project" value="UniProtKB-UniRule"/>
</dbReference>
<dbReference type="FunFam" id="1.20.58.1610:FF:000001">
    <property type="entry name" value="NAD(P)H-quinone oxidoreductase subunit 3, chloroplastic"/>
    <property type="match status" value="1"/>
</dbReference>
<dbReference type="Gene3D" id="1.20.58.1610">
    <property type="entry name" value="NADH:ubiquinone/plastoquinone oxidoreductase, chain 3"/>
    <property type="match status" value="1"/>
</dbReference>
<dbReference type="HAMAP" id="MF_01394">
    <property type="entry name" value="NDH1_NuoA"/>
    <property type="match status" value="1"/>
</dbReference>
<dbReference type="InterPro" id="IPR023043">
    <property type="entry name" value="NAD(P)H_OxRDtase_bac/plastid"/>
</dbReference>
<dbReference type="InterPro" id="IPR000440">
    <property type="entry name" value="NADH_UbQ/plastoQ_OxRdtase_su3"/>
</dbReference>
<dbReference type="InterPro" id="IPR038430">
    <property type="entry name" value="NDAH_ubi_oxred_su3_sf"/>
</dbReference>
<dbReference type="PANTHER" id="PTHR11058">
    <property type="entry name" value="NADH-UBIQUINONE OXIDOREDUCTASE CHAIN 3"/>
    <property type="match status" value="1"/>
</dbReference>
<dbReference type="PANTHER" id="PTHR11058:SF9">
    <property type="entry name" value="NADH-UBIQUINONE OXIDOREDUCTASE CHAIN 3"/>
    <property type="match status" value="1"/>
</dbReference>
<dbReference type="Pfam" id="PF00507">
    <property type="entry name" value="Oxidored_q4"/>
    <property type="match status" value="1"/>
</dbReference>
<feature type="chain" id="PRO_0000362810" description="NAD(P)H-quinone oxidoreductase subunit 3, chloroplastic">
    <location>
        <begin position="1"/>
        <end position="120"/>
    </location>
</feature>
<feature type="transmembrane region" description="Helical" evidence="1">
    <location>
        <begin position="9"/>
        <end position="29"/>
    </location>
</feature>
<feature type="transmembrane region" description="Helical" evidence="1">
    <location>
        <begin position="64"/>
        <end position="84"/>
    </location>
</feature>
<feature type="transmembrane region" description="Helical" evidence="1">
    <location>
        <begin position="88"/>
        <end position="108"/>
    </location>
</feature>
<protein>
    <recommendedName>
        <fullName evidence="1">NAD(P)H-quinone oxidoreductase subunit 3, chloroplastic</fullName>
        <ecNumber evidence="1">7.1.1.-</ecNumber>
    </recommendedName>
    <alternativeName>
        <fullName evidence="1">NAD(P)H dehydrogenase subunit 3</fullName>
    </alternativeName>
    <alternativeName>
        <fullName evidence="1">NADH-plastoquinone oxidoreductase subunit 3</fullName>
    </alternativeName>
</protein>
<name>NU3C_BARVE</name>
<gene>
    <name evidence="1" type="primary">ndhC</name>
</gene>
<geneLocation type="chloroplast"/>
<sequence length="120" mass="13873">MFLLYEYDIFWAFLIISSAIPVLAFFISGVLSPIRKGPEKLSSYESGIEPIGDAWLQFRIRYYMFALVFVVFDVETVFLYPWAMSFDVLGVSAFIEAFIFVLILILGLVYAWRKGALEWS</sequence>